<protein>
    <recommendedName>
        <fullName>Fimbria adhesin EcpD</fullName>
    </recommendedName>
</protein>
<dbReference type="EMBL" id="AE005174">
    <property type="protein sequence ID" value="AAG54615.1"/>
    <property type="molecule type" value="Genomic_DNA"/>
</dbReference>
<dbReference type="EMBL" id="BA000007">
    <property type="protein sequence ID" value="BAB33743.1"/>
    <property type="molecule type" value="Genomic_DNA"/>
</dbReference>
<dbReference type="PIR" id="C85519">
    <property type="entry name" value="C85519"/>
</dbReference>
<dbReference type="PIR" id="H90668">
    <property type="entry name" value="H90668"/>
</dbReference>
<dbReference type="RefSeq" id="NP_308347.1">
    <property type="nucleotide sequence ID" value="NC_002695.1"/>
</dbReference>
<dbReference type="RefSeq" id="WP_001265657.1">
    <property type="nucleotide sequence ID" value="NZ_VOAI01000033.1"/>
</dbReference>
<dbReference type="STRING" id="155864.Z0357"/>
<dbReference type="GeneID" id="914419"/>
<dbReference type="KEGG" id="ece:Z0357"/>
<dbReference type="KEGG" id="ecs:ECs_0320"/>
<dbReference type="PATRIC" id="fig|386585.9.peg.414"/>
<dbReference type="eggNOG" id="ENOG502Z8ZC">
    <property type="taxonomic scope" value="Bacteria"/>
</dbReference>
<dbReference type="HOGENOM" id="CLU_039494_0_0_6"/>
<dbReference type="OMA" id="VEATWRN"/>
<dbReference type="Proteomes" id="UP000000558">
    <property type="component" value="Chromosome"/>
</dbReference>
<dbReference type="Proteomes" id="UP000002519">
    <property type="component" value="Chromosome"/>
</dbReference>
<dbReference type="GO" id="GO:0009289">
    <property type="term" value="C:pilus"/>
    <property type="evidence" value="ECO:0007669"/>
    <property type="project" value="UniProtKB-SubCell"/>
</dbReference>
<name>ECPD_ECO57</name>
<accession>Q8X4N4</accession>
<accession>Q7AHC3</accession>
<sequence>MRVNLLIAMIIFALIWPVTALRAAVSKTTWADAPAREFVFVENNSDDNFFVTPGGALDPRLTGANRWTGLKYNGSGTIYQQSLGYIDNGYNTGLYTNWKFDMWLENSPVSSPLTGLRCINWYAGCNMTTSLILPQTTDTSGFYGATVTSGGAKWMHGMLSDAFYQYLQQMPVGSSFTMTINACQTSVNYDASSGARCKDQASGNWYVRNVTHTKAANLRLINTHSLAEVFINSDGVPTLGEGNADCRTQTIGSRSGLSCKMVNYTLQTNGLSNTSIHIFPAIANSSLASAVGAYDMQFSLNGSSWKPVSNTAYYYTFNEMKSADSIYVFFSSNFFKQMVNQGISDINTKDLFNFRFQNTTSPESGWYEFSTSNTLIIKPRDFSISIISDEYTQTPSREGYVGSGESALDFGYIVTTSGKTAADEVLIKVTGPAQVIGGRSYCVFSSDDGKAKVPFPATLSFITRNGATKTYDAGCDDSWRDMTDALWLTTPWTDISGEVGQMDKTTVKFSIPMDNAISLRTVDDNGWFGEVSASGEIHVQATWRNIN</sequence>
<evidence type="ECO:0000250" key="1"/>
<evidence type="ECO:0000255" key="2"/>
<evidence type="ECO:0000269" key="3">
    <source>
    </source>
</evidence>
<evidence type="ECO:0000305" key="4"/>
<reference key="1">
    <citation type="journal article" date="2001" name="DNA Res.">
        <title>Complete genome sequence of enterohemorrhagic Escherichia coli O157:H7 and genomic comparison with a laboratory strain K-12.</title>
        <authorList>
            <person name="Hayashi T."/>
            <person name="Makino K."/>
            <person name="Ohnishi M."/>
            <person name="Kurokawa K."/>
            <person name="Ishii K."/>
            <person name="Yokoyama K."/>
            <person name="Han C.-G."/>
            <person name="Ohtsubo E."/>
            <person name="Nakayama K."/>
            <person name="Murata T."/>
            <person name="Tanaka M."/>
            <person name="Tobe T."/>
            <person name="Iida T."/>
            <person name="Takami H."/>
            <person name="Honda T."/>
            <person name="Sasakawa C."/>
            <person name="Ogasawara N."/>
            <person name="Yasunaga T."/>
            <person name="Kuhara S."/>
            <person name="Shiba T."/>
            <person name="Hattori M."/>
            <person name="Shinagawa H."/>
        </authorList>
    </citation>
    <scope>NUCLEOTIDE SEQUENCE [LARGE SCALE GENOMIC DNA]</scope>
    <source>
        <strain>O157:H7 / Sakai / RIMD 0509952 / EHEC</strain>
    </source>
</reference>
<reference key="2">
    <citation type="journal article" date="2001" name="Nature">
        <title>Genome sequence of enterohaemorrhagic Escherichia coli O157:H7.</title>
        <authorList>
            <person name="Perna N.T."/>
            <person name="Plunkett G. III"/>
            <person name="Burland V."/>
            <person name="Mau B."/>
            <person name="Glasner J.D."/>
            <person name="Rose D.J."/>
            <person name="Mayhew G.F."/>
            <person name="Evans P.S."/>
            <person name="Gregor J."/>
            <person name="Kirkpatrick H.A."/>
            <person name="Posfai G."/>
            <person name="Hackett J."/>
            <person name="Klink S."/>
            <person name="Boutin A."/>
            <person name="Shao Y."/>
            <person name="Miller L."/>
            <person name="Grotbeck E.J."/>
            <person name="Davis N.W."/>
            <person name="Lim A."/>
            <person name="Dimalanta E.T."/>
            <person name="Potamousis K."/>
            <person name="Apodaca J."/>
            <person name="Anantharaman T.S."/>
            <person name="Lin J."/>
            <person name="Yen G."/>
            <person name="Schwartz D.C."/>
            <person name="Welch R.A."/>
            <person name="Blattner F.R."/>
        </authorList>
    </citation>
    <scope>NUCLEOTIDE SEQUENCE [LARGE SCALE GENOMIC DNA]</scope>
    <source>
        <strain>O157:H7 / EDL933 / ATCC 700927 / EHEC</strain>
    </source>
</reference>
<reference key="3">
    <citation type="journal article" date="2012" name="J. Bacteriol.">
        <title>Transcriptional regulation of the ecp operon by EcpR, IHF, and H-NS in attaching and effacing Escherichia coli.</title>
        <authorList>
            <person name="Martinez-Santos V.I."/>
            <person name="Medrano-Lopez A."/>
            <person name="Saldana Z."/>
            <person name="Giron J.A."/>
            <person name="Puente J.L."/>
        </authorList>
    </citation>
    <scope>INDUCTION</scope>
    <source>
        <strain>O157:H7 / EDL933 / ATCC 700927 / EHEC</strain>
    </source>
</reference>
<organism>
    <name type="scientific">Escherichia coli O157:H7</name>
    <dbReference type="NCBI Taxonomy" id="83334"/>
    <lineage>
        <taxon>Bacteria</taxon>
        <taxon>Pseudomonadati</taxon>
        <taxon>Pseudomonadota</taxon>
        <taxon>Gammaproteobacteria</taxon>
        <taxon>Enterobacterales</taxon>
        <taxon>Enterobacteriaceae</taxon>
        <taxon>Escherichia</taxon>
    </lineage>
</organism>
<proteinExistence type="evidence at transcript level"/>
<comment type="function">
    <text evidence="1">Part of the ecpRABCDE operon, which encodes the E.coli common pilus (ECP). ECP is found in both commensal and pathogenic strains and plays a dual role in early-stage biofilm development and host cell recognition. Tip pilus adhesin, which is required for assembly of EcpA into fibers (By similarity).</text>
</comment>
<comment type="subunit">
    <text evidence="1">Forms polymers. Interacts with EcpA.</text>
</comment>
<comment type="subcellular location">
    <subcellularLocation>
        <location evidence="1">Fimbrium</location>
    </subcellularLocation>
</comment>
<comment type="induction">
    <text evidence="3">Negatively regulated by H-NS. Positively regulated by IHF and EcpR.</text>
</comment>
<comment type="similarity">
    <text evidence="4">Belongs to the EcpD/MatE family.</text>
</comment>
<gene>
    <name type="primary">ecpD</name>
    <name type="synonym">yagW</name>
    <name type="ordered locus">Z0357</name>
    <name type="ordered locus">ECs0320</name>
</gene>
<keyword id="KW-0281">Fimbrium</keyword>
<keyword id="KW-0675">Receptor</keyword>
<keyword id="KW-1185">Reference proteome</keyword>
<keyword id="KW-0732">Signal</keyword>
<feature type="signal peptide" evidence="2">
    <location>
        <begin position="1"/>
        <end position="23"/>
    </location>
</feature>
<feature type="chain" id="PRO_0000429535" description="Fimbria adhesin EcpD">
    <location>
        <begin position="24"/>
        <end position="547"/>
    </location>
</feature>